<dbReference type="EMBL" id="X62644">
    <property type="protein sequence ID" value="CAA44513.1"/>
    <property type="molecule type" value="mRNA"/>
</dbReference>
<dbReference type="EMBL" id="AL353993">
    <property type="protein sequence ID" value="CAB89325.1"/>
    <property type="status" value="ALT_SEQ"/>
    <property type="molecule type" value="Genomic_DNA"/>
</dbReference>
<dbReference type="EMBL" id="CP002688">
    <property type="protein sequence ID" value="AED92122.1"/>
    <property type="molecule type" value="Genomic_DNA"/>
</dbReference>
<dbReference type="EMBL" id="AK229364">
    <property type="protein sequence ID" value="BAF01227.1"/>
    <property type="molecule type" value="mRNA"/>
</dbReference>
<dbReference type="EMBL" id="U09340">
    <property type="protein sequence ID" value="AAA56906.1"/>
    <property type="status" value="ALT_INIT"/>
    <property type="molecule type" value="mRNA"/>
</dbReference>
<dbReference type="PIR" id="S20930">
    <property type="entry name" value="S20930"/>
</dbReference>
<dbReference type="PIR" id="T49950">
    <property type="entry name" value="T49950"/>
</dbReference>
<dbReference type="PIR" id="T52370">
    <property type="entry name" value="T52370"/>
</dbReference>
<dbReference type="RefSeq" id="NP_568309.2">
    <molecule id="Q00466-1"/>
    <property type="nucleotide sequence ID" value="NM_121519.3"/>
</dbReference>
<dbReference type="SMR" id="Q00466"/>
<dbReference type="FunCoup" id="Q00466">
    <property type="interactions" value="6"/>
</dbReference>
<dbReference type="STRING" id="3702.Q00466"/>
<dbReference type="PaxDb" id="3702-AT5G15150.1"/>
<dbReference type="ProteomicsDB" id="247162">
    <molecule id="Q00466-1"/>
</dbReference>
<dbReference type="EnsemblPlants" id="AT5G15150.1">
    <molecule id="Q00466-1"/>
    <property type="protein sequence ID" value="AT5G15150.1"/>
    <property type="gene ID" value="AT5G15150"/>
</dbReference>
<dbReference type="GeneID" id="831367"/>
<dbReference type="Gramene" id="AT5G15150.1">
    <molecule id="Q00466-1"/>
    <property type="protein sequence ID" value="AT5G15150.1"/>
    <property type="gene ID" value="AT5G15150"/>
</dbReference>
<dbReference type="KEGG" id="ath:AT5G15150"/>
<dbReference type="Araport" id="AT5G15150"/>
<dbReference type="TAIR" id="AT5G15150">
    <property type="gene designation" value="HB-3"/>
</dbReference>
<dbReference type="eggNOG" id="KOG0483">
    <property type="taxonomic scope" value="Eukaryota"/>
</dbReference>
<dbReference type="HOGENOM" id="CLU_060842_4_0_1"/>
<dbReference type="InParanoid" id="Q00466"/>
<dbReference type="OMA" id="FHNIDEQ"/>
<dbReference type="PhylomeDB" id="Q00466"/>
<dbReference type="PRO" id="PR:Q00466"/>
<dbReference type="Proteomes" id="UP000006548">
    <property type="component" value="Chromosome 5"/>
</dbReference>
<dbReference type="ExpressionAtlas" id="Q00466">
    <property type="expression patterns" value="baseline and differential"/>
</dbReference>
<dbReference type="GO" id="GO:0005634">
    <property type="term" value="C:nucleus"/>
    <property type="evidence" value="ECO:0007669"/>
    <property type="project" value="UniProtKB-SubCell"/>
</dbReference>
<dbReference type="GO" id="GO:0003677">
    <property type="term" value="F:DNA binding"/>
    <property type="evidence" value="ECO:0000250"/>
    <property type="project" value="TAIR"/>
</dbReference>
<dbReference type="GO" id="GO:0003700">
    <property type="term" value="F:DNA-binding transcription factor activity"/>
    <property type="evidence" value="ECO:0000250"/>
    <property type="project" value="TAIR"/>
</dbReference>
<dbReference type="GO" id="GO:0000981">
    <property type="term" value="F:DNA-binding transcription factor activity, RNA polymerase II-specific"/>
    <property type="evidence" value="ECO:0007669"/>
    <property type="project" value="InterPro"/>
</dbReference>
<dbReference type="GO" id="GO:0043565">
    <property type="term" value="F:sequence-specific DNA binding"/>
    <property type="evidence" value="ECO:0000314"/>
    <property type="project" value="TAIR"/>
</dbReference>
<dbReference type="CDD" id="cd00086">
    <property type="entry name" value="homeodomain"/>
    <property type="match status" value="1"/>
</dbReference>
<dbReference type="FunFam" id="1.10.10.60:FF:000200">
    <property type="entry name" value="Homeobox-leucine zipper protein ATHB-13"/>
    <property type="match status" value="1"/>
</dbReference>
<dbReference type="Gene3D" id="1.10.10.60">
    <property type="entry name" value="Homeodomain-like"/>
    <property type="match status" value="1"/>
</dbReference>
<dbReference type="InterPro" id="IPR001356">
    <property type="entry name" value="HD"/>
</dbReference>
<dbReference type="InterPro" id="IPR045224">
    <property type="entry name" value="HDZip_class_I_plant"/>
</dbReference>
<dbReference type="InterPro" id="IPR017970">
    <property type="entry name" value="Homeobox_CS"/>
</dbReference>
<dbReference type="InterPro" id="IPR009057">
    <property type="entry name" value="Homeodomain-like_sf"/>
</dbReference>
<dbReference type="InterPro" id="IPR000047">
    <property type="entry name" value="HTH_motif"/>
</dbReference>
<dbReference type="InterPro" id="IPR003106">
    <property type="entry name" value="Leu_zip_homeo"/>
</dbReference>
<dbReference type="PANTHER" id="PTHR24326">
    <property type="entry name" value="HOMEOBOX-LEUCINE ZIPPER PROTEIN"/>
    <property type="match status" value="1"/>
</dbReference>
<dbReference type="PANTHER" id="PTHR24326:SF538">
    <property type="entry name" value="HOMEOBOX-LEUCINE ZIPPER PROTEIN HAT7"/>
    <property type="match status" value="1"/>
</dbReference>
<dbReference type="Pfam" id="PF02183">
    <property type="entry name" value="HALZ"/>
    <property type="match status" value="1"/>
</dbReference>
<dbReference type="Pfam" id="PF00046">
    <property type="entry name" value="Homeodomain"/>
    <property type="match status" value="1"/>
</dbReference>
<dbReference type="PRINTS" id="PR00031">
    <property type="entry name" value="HTHREPRESSR"/>
</dbReference>
<dbReference type="SMART" id="SM00389">
    <property type="entry name" value="HOX"/>
    <property type="match status" value="1"/>
</dbReference>
<dbReference type="SUPFAM" id="SSF46689">
    <property type="entry name" value="Homeodomain-like"/>
    <property type="match status" value="1"/>
</dbReference>
<dbReference type="PROSITE" id="PS00027">
    <property type="entry name" value="HOMEOBOX_1"/>
    <property type="match status" value="1"/>
</dbReference>
<dbReference type="PROSITE" id="PS50071">
    <property type="entry name" value="HOMEOBOX_2"/>
    <property type="match status" value="1"/>
</dbReference>
<name>HAT7_ARATH</name>
<gene>
    <name type="primary">HAT7</name>
    <name type="synonym">ATHB-3</name>
    <name type="ordered locus">At5g15150</name>
    <name type="ORF">F8M21_40</name>
</gene>
<comment type="function">
    <text evidence="1">Probable transcription factor.</text>
</comment>
<comment type="subcellular location">
    <subcellularLocation>
        <location>Nucleus</location>
    </subcellularLocation>
</comment>
<comment type="alternative products">
    <event type="alternative splicing"/>
    <isoform>
        <id>Q00466-1</id>
        <name>1</name>
        <sequence type="displayed"/>
    </isoform>
    <isoform>
        <id>Q00466-2</id>
        <name>2</name>
        <sequence type="described" ref="VSP_013647 VSP_013648 VSP_013649"/>
    </isoform>
</comment>
<comment type="tissue specificity">
    <text evidence="4">Expressed predominantly in flowers, and in the cortex of the root and the stem.</text>
</comment>
<comment type="miscellaneous">
    <molecule>Isoform 2</molecule>
    <text evidence="6">May be due to intron retention.</text>
</comment>
<comment type="similarity">
    <text evidence="6">Belongs to the HD-ZIP homeobox family. Class I subfamily.</text>
</comment>
<comment type="sequence caution" evidence="6">
    <conflict type="erroneous initiation">
        <sequence resource="EMBL-CDS" id="AAA56906"/>
    </conflict>
</comment>
<comment type="sequence caution" evidence="6">
    <conflict type="erroneous gene model prediction">
        <sequence resource="EMBL-CDS" id="CAB89325"/>
    </conflict>
</comment>
<keyword id="KW-0025">Alternative splicing</keyword>
<keyword id="KW-0238">DNA-binding</keyword>
<keyword id="KW-0371">Homeobox</keyword>
<keyword id="KW-0539">Nucleus</keyword>
<keyword id="KW-1185">Reference proteome</keyword>
<keyword id="KW-0804">Transcription</keyword>
<keyword id="KW-0805">Transcription regulation</keyword>
<protein>
    <recommendedName>
        <fullName>Homeobox-leucine zipper protein HAT7</fullName>
    </recommendedName>
    <alternativeName>
        <fullName>HD-ZIP protein ATHB-3</fullName>
    </alternativeName>
    <alternativeName>
        <fullName>Homeodomain transcription factor ATHB-3</fullName>
    </alternativeName>
    <alternativeName>
        <fullName>Homeodomain-leucine zipper protein HAT7</fullName>
        <shortName>HD-ZIP protein 7</shortName>
    </alternativeName>
</protein>
<feature type="chain" id="PRO_0000048903" description="Homeobox-leucine zipper protein HAT7">
    <location>
        <begin position="1"/>
        <end position="314"/>
    </location>
</feature>
<feature type="DNA-binding region" description="Homeobox" evidence="2">
    <location>
        <begin position="112"/>
        <end position="171"/>
    </location>
</feature>
<feature type="region of interest" description="Disordered" evidence="3">
    <location>
        <begin position="77"/>
        <end position="109"/>
    </location>
</feature>
<feature type="region of interest" description="Leucine-zipper">
    <location>
        <begin position="172"/>
        <end position="207"/>
    </location>
</feature>
<feature type="compositionally biased region" description="Polar residues" evidence="3">
    <location>
        <begin position="82"/>
        <end position="95"/>
    </location>
</feature>
<feature type="splice variant" id="VSP_013647" description="In isoform 2." evidence="5">
    <location>
        <begin position="1"/>
        <end position="63"/>
    </location>
</feature>
<feature type="splice variant" id="VSP_013648" description="In isoform 2." evidence="5">
    <original>LVALKKHDRKE</original>
    <variation>VYNIHTNSTNR</variation>
    <location>
        <begin position="204"/>
        <end position="214"/>
    </location>
</feature>
<feature type="splice variant" id="VSP_013649" description="In isoform 2." evidence="5">
    <location>
        <begin position="215"/>
        <end position="314"/>
    </location>
</feature>
<feature type="sequence conflict" description="In Ref. 1; CAA44513." evidence="6" ref="1">
    <original>H</original>
    <variation>L</variation>
    <location>
        <position position="78"/>
    </location>
</feature>
<feature type="sequence conflict" description="In Ref. 5; AAA56906." evidence="6" ref="5">
    <original>H</original>
    <variation>Y</variation>
    <location>
        <position position="78"/>
    </location>
</feature>
<feature type="sequence conflict" description="In Ref. 5; AAA56906." evidence="6" ref="5">
    <original>T</original>
    <variation>A</variation>
    <location>
        <position position="266"/>
    </location>
</feature>
<feature type="sequence conflict" description="In Ref. 5; AAA56906." evidence="6" ref="5">
    <original>Q</original>
    <variation>E</variation>
    <location>
        <position position="273"/>
    </location>
</feature>
<evidence type="ECO:0000250" key="1"/>
<evidence type="ECO:0000255" key="2">
    <source>
        <dbReference type="PROSITE-ProRule" id="PRU00108"/>
    </source>
</evidence>
<evidence type="ECO:0000256" key="3">
    <source>
        <dbReference type="SAM" id="MobiDB-lite"/>
    </source>
</evidence>
<evidence type="ECO:0000269" key="4">
    <source>
    </source>
</evidence>
<evidence type="ECO:0000303" key="5">
    <source>
    </source>
</evidence>
<evidence type="ECO:0000305" key="6"/>
<reference key="1">
    <citation type="journal article" date="1992" name="Plant Mol. Biol.">
        <title>A new homeobox-leucine zipper gene from Arabidopsis thaliana.</title>
        <authorList>
            <person name="Mattsson J."/>
            <person name="Soederman E."/>
            <person name="Svenson M."/>
            <person name="Borkird C."/>
            <person name="Engstroem P."/>
        </authorList>
    </citation>
    <scope>NUCLEOTIDE SEQUENCE [MRNA] (ISOFORM 2)</scope>
    <source>
        <strain>cv. Columbia</strain>
    </source>
</reference>
<reference key="2">
    <citation type="journal article" date="2000" name="Nature">
        <title>Sequence and analysis of chromosome 5 of the plant Arabidopsis thaliana.</title>
        <authorList>
            <person name="Tabata S."/>
            <person name="Kaneko T."/>
            <person name="Nakamura Y."/>
            <person name="Kotani H."/>
            <person name="Kato T."/>
            <person name="Asamizu E."/>
            <person name="Miyajima N."/>
            <person name="Sasamoto S."/>
            <person name="Kimura T."/>
            <person name="Hosouchi T."/>
            <person name="Kawashima K."/>
            <person name="Kohara M."/>
            <person name="Matsumoto M."/>
            <person name="Matsuno A."/>
            <person name="Muraki A."/>
            <person name="Nakayama S."/>
            <person name="Nakazaki N."/>
            <person name="Naruo K."/>
            <person name="Okumura S."/>
            <person name="Shinpo S."/>
            <person name="Takeuchi C."/>
            <person name="Wada T."/>
            <person name="Watanabe A."/>
            <person name="Yamada M."/>
            <person name="Yasuda M."/>
            <person name="Sato S."/>
            <person name="de la Bastide M."/>
            <person name="Huang E."/>
            <person name="Spiegel L."/>
            <person name="Gnoj L."/>
            <person name="O'Shaughnessy A."/>
            <person name="Preston R."/>
            <person name="Habermann K."/>
            <person name="Murray J."/>
            <person name="Johnson D."/>
            <person name="Rohlfing T."/>
            <person name="Nelson J."/>
            <person name="Stoneking T."/>
            <person name="Pepin K."/>
            <person name="Spieth J."/>
            <person name="Sekhon M."/>
            <person name="Armstrong J."/>
            <person name="Becker M."/>
            <person name="Belter E."/>
            <person name="Cordum H."/>
            <person name="Cordes M."/>
            <person name="Courtney L."/>
            <person name="Courtney W."/>
            <person name="Dante M."/>
            <person name="Du H."/>
            <person name="Edwards J."/>
            <person name="Fryman J."/>
            <person name="Haakensen B."/>
            <person name="Lamar E."/>
            <person name="Latreille P."/>
            <person name="Leonard S."/>
            <person name="Meyer R."/>
            <person name="Mulvaney E."/>
            <person name="Ozersky P."/>
            <person name="Riley A."/>
            <person name="Strowmatt C."/>
            <person name="Wagner-McPherson C."/>
            <person name="Wollam A."/>
            <person name="Yoakum M."/>
            <person name="Bell M."/>
            <person name="Dedhia N."/>
            <person name="Parnell L."/>
            <person name="Shah R."/>
            <person name="Rodriguez M."/>
            <person name="Hoon See L."/>
            <person name="Vil D."/>
            <person name="Baker J."/>
            <person name="Kirchoff K."/>
            <person name="Toth K."/>
            <person name="King L."/>
            <person name="Bahret A."/>
            <person name="Miller B."/>
            <person name="Marra M.A."/>
            <person name="Martienssen R."/>
            <person name="McCombie W.R."/>
            <person name="Wilson R.K."/>
            <person name="Murphy G."/>
            <person name="Bancroft I."/>
            <person name="Volckaert G."/>
            <person name="Wambutt R."/>
            <person name="Duesterhoeft A."/>
            <person name="Stiekema W."/>
            <person name="Pohl T."/>
            <person name="Entian K.-D."/>
            <person name="Terryn N."/>
            <person name="Hartley N."/>
            <person name="Bent E."/>
            <person name="Johnson S."/>
            <person name="Langham S.-A."/>
            <person name="McCullagh B."/>
            <person name="Robben J."/>
            <person name="Grymonprez B."/>
            <person name="Zimmermann W."/>
            <person name="Ramsperger U."/>
            <person name="Wedler H."/>
            <person name="Balke K."/>
            <person name="Wedler E."/>
            <person name="Peters S."/>
            <person name="van Staveren M."/>
            <person name="Dirkse W."/>
            <person name="Mooijman P."/>
            <person name="Klein Lankhorst R."/>
            <person name="Weitzenegger T."/>
            <person name="Bothe G."/>
            <person name="Rose M."/>
            <person name="Hauf J."/>
            <person name="Berneiser S."/>
            <person name="Hempel S."/>
            <person name="Feldpausch M."/>
            <person name="Lamberth S."/>
            <person name="Villarroel R."/>
            <person name="Gielen J."/>
            <person name="Ardiles W."/>
            <person name="Bents O."/>
            <person name="Lemcke K."/>
            <person name="Kolesov G."/>
            <person name="Mayer K.F.X."/>
            <person name="Rudd S."/>
            <person name="Schoof H."/>
            <person name="Schueller C."/>
            <person name="Zaccaria P."/>
            <person name="Mewes H.-W."/>
            <person name="Bevan M."/>
            <person name="Fransz P.F."/>
        </authorList>
    </citation>
    <scope>NUCLEOTIDE SEQUENCE [LARGE SCALE GENOMIC DNA]</scope>
    <source>
        <strain>cv. Columbia</strain>
    </source>
</reference>
<reference key="3">
    <citation type="journal article" date="2017" name="Plant J.">
        <title>Araport11: a complete reannotation of the Arabidopsis thaliana reference genome.</title>
        <authorList>
            <person name="Cheng C.Y."/>
            <person name="Krishnakumar V."/>
            <person name="Chan A.P."/>
            <person name="Thibaud-Nissen F."/>
            <person name="Schobel S."/>
            <person name="Town C.D."/>
        </authorList>
    </citation>
    <scope>GENOME REANNOTATION</scope>
    <source>
        <strain>cv. Columbia</strain>
    </source>
</reference>
<reference key="4">
    <citation type="submission" date="2006-07" db="EMBL/GenBank/DDBJ databases">
        <title>Large-scale analysis of RIKEN Arabidopsis full-length (RAFL) cDNAs.</title>
        <authorList>
            <person name="Totoki Y."/>
            <person name="Seki M."/>
            <person name="Ishida J."/>
            <person name="Nakajima M."/>
            <person name="Enju A."/>
            <person name="Kamiya A."/>
            <person name="Narusaka M."/>
            <person name="Shin-i T."/>
            <person name="Nakagawa M."/>
            <person name="Sakamoto N."/>
            <person name="Oishi K."/>
            <person name="Kohara Y."/>
            <person name="Kobayashi M."/>
            <person name="Toyoda A."/>
            <person name="Sakaki Y."/>
            <person name="Sakurai T."/>
            <person name="Iida K."/>
            <person name="Akiyama K."/>
            <person name="Satou M."/>
            <person name="Toyoda T."/>
            <person name="Konagaya A."/>
            <person name="Carninci P."/>
            <person name="Kawai J."/>
            <person name="Hayashizaki Y."/>
            <person name="Shinozaki K."/>
        </authorList>
    </citation>
    <scope>NUCLEOTIDE SEQUENCE [LARGE SCALE MRNA] (ISOFORM 1)</scope>
    <source>
        <strain>cv. Columbia</strain>
    </source>
</reference>
<reference key="5">
    <citation type="journal article" date="1994" name="Proc. Natl. Acad. Sci. U.S.A.">
        <title>Structure of homeobox-leucine zipper genes suggests a model for the evolution of gene families.</title>
        <authorList>
            <person name="Schena M."/>
            <person name="Davis R.W."/>
        </authorList>
    </citation>
    <scope>NUCLEOTIDE SEQUENCE [MRNA] OF 19-314 (ISOFORM 1)</scope>
    <source>
        <strain>cv. Columbia</strain>
    </source>
</reference>
<reference key="6">
    <citation type="journal article" date="2005" name="Plant Physiol.">
        <title>Homeodomain leucine zipper class I genes in Arabidopsis. Expression patterns and phylogenetic relationships.</title>
        <authorList>
            <person name="Henriksson E."/>
            <person name="Olsson A.S.B."/>
            <person name="Johannesson H."/>
            <person name="Johansson H."/>
            <person name="Hanson J."/>
            <person name="Engstroem P."/>
            <person name="Soederman E."/>
        </authorList>
    </citation>
    <scope>GENE FAMILY</scope>
    <scope>TISSUE SPECIFICITY</scope>
</reference>
<sequence length="314" mass="36282">MYMYEEERNNINNNQEGLRLEMAFPQHGFMFQQLHEDNAHHLPSPTSLPSCPPHLFYGGGGNYMMNRSMSFTGVSDHHHLTQKSPTTTNNMNDQDQVGEEDNLSDDGSHMMLGEKKKRLNLEQVRALEKSFELGNKLEPERKMQLAKALGLQPRQIAIWFQNRRARWKTKQLERDYDSLKKQFDVLKSDNDSLLAHNKKLHAELVALKKHDRKESAKIKREFAEASWSNNGSTENNHNNNSSDANHVSMIKDLFPSSIRSATATTTSTHIDHQIVQDQDQGFCNMFNGIDETTSASYWAWPDQQQQHHNHHQFN</sequence>
<organism>
    <name type="scientific">Arabidopsis thaliana</name>
    <name type="common">Mouse-ear cress</name>
    <dbReference type="NCBI Taxonomy" id="3702"/>
    <lineage>
        <taxon>Eukaryota</taxon>
        <taxon>Viridiplantae</taxon>
        <taxon>Streptophyta</taxon>
        <taxon>Embryophyta</taxon>
        <taxon>Tracheophyta</taxon>
        <taxon>Spermatophyta</taxon>
        <taxon>Magnoliopsida</taxon>
        <taxon>eudicotyledons</taxon>
        <taxon>Gunneridae</taxon>
        <taxon>Pentapetalae</taxon>
        <taxon>rosids</taxon>
        <taxon>malvids</taxon>
        <taxon>Brassicales</taxon>
        <taxon>Brassicaceae</taxon>
        <taxon>Camelineae</taxon>
        <taxon>Arabidopsis</taxon>
    </lineage>
</organism>
<accession>Q00466</accession>
<accession>Q0WNS2</accession>
<accession>Q9LXG6</accession>
<proteinExistence type="evidence at transcript level"/>